<evidence type="ECO:0000256" key="1">
    <source>
        <dbReference type="SAM" id="MobiDB-lite"/>
    </source>
</evidence>
<evidence type="ECO:0000269" key="2">
    <source>
    </source>
</evidence>
<evidence type="ECO:0000303" key="3">
    <source>
    </source>
</evidence>
<evidence type="ECO:0000305" key="4"/>
<evidence type="ECO:0000305" key="5">
    <source>
    </source>
</evidence>
<evidence type="ECO:0007744" key="6">
    <source>
        <dbReference type="PDB" id="6YW5"/>
    </source>
</evidence>
<evidence type="ECO:0007744" key="7">
    <source>
        <dbReference type="PDB" id="6YWS"/>
    </source>
</evidence>
<proteinExistence type="evidence at protein level"/>
<comment type="function">
    <text evidence="5">Component of the mitochondrial ribosome (mitoribosome), a dedicated translation machinery responsible for the synthesis of mitochondrial genome-encoded proteins, including at least some of the essential transmembrane subunits of the mitochondrial respiratory chain. The mitoribosomes are attached to the mitochondrial inner membrane and translation products are cotranslationally integrated into the membrane.</text>
</comment>
<comment type="subunit">
    <text evidence="2">Component of the mitochondrial large ribosomal subunit (mt-LSU). Mature N.crassa 74S mitochondrial ribosomes consist of a small (37S) and a large (54S) subunit. The 37S small subunit contains a 16S ribosomal RNA (16S mt-rRNA) and 32 different proteins. The 54S large subunit contains a 23S rRNA (23S mt-rRNA) and 42 different proteins. bL31m bridges the mt-LSU central protuberance and the mt-SSU head.</text>
</comment>
<comment type="subcellular location">
    <subcellularLocation>
        <location evidence="2">Mitochondrion</location>
    </subcellularLocation>
</comment>
<comment type="similarity">
    <text evidence="4">Belongs to the bacterial ribosomal protein bL31 family. Highly divergent.</text>
</comment>
<protein>
    <recommendedName>
        <fullName evidence="3">Large ribosomal subunit protein bL31m</fullName>
    </recommendedName>
</protein>
<organism>
    <name type="scientific">Neurospora crassa (strain ATCC 24698 / 74-OR23-1A / CBS 708.71 / DSM 1257 / FGSC 987)</name>
    <dbReference type="NCBI Taxonomy" id="367110"/>
    <lineage>
        <taxon>Eukaryota</taxon>
        <taxon>Fungi</taxon>
        <taxon>Dikarya</taxon>
        <taxon>Ascomycota</taxon>
        <taxon>Pezizomycotina</taxon>
        <taxon>Sordariomycetes</taxon>
        <taxon>Sordariomycetidae</taxon>
        <taxon>Sordariales</taxon>
        <taxon>Sordariaceae</taxon>
        <taxon>Neurospora</taxon>
    </lineage>
</organism>
<reference key="1">
    <citation type="journal article" date="2003" name="Nature">
        <title>The genome sequence of the filamentous fungus Neurospora crassa.</title>
        <authorList>
            <person name="Galagan J.E."/>
            <person name="Calvo S.E."/>
            <person name="Borkovich K.A."/>
            <person name="Selker E.U."/>
            <person name="Read N.D."/>
            <person name="Jaffe D.B."/>
            <person name="FitzHugh W."/>
            <person name="Ma L.-J."/>
            <person name="Smirnov S."/>
            <person name="Purcell S."/>
            <person name="Rehman B."/>
            <person name="Elkins T."/>
            <person name="Engels R."/>
            <person name="Wang S."/>
            <person name="Nielsen C.B."/>
            <person name="Butler J."/>
            <person name="Endrizzi M."/>
            <person name="Qui D."/>
            <person name="Ianakiev P."/>
            <person name="Bell-Pedersen D."/>
            <person name="Nelson M.A."/>
            <person name="Werner-Washburne M."/>
            <person name="Selitrennikoff C.P."/>
            <person name="Kinsey J.A."/>
            <person name="Braun E.L."/>
            <person name="Zelter A."/>
            <person name="Schulte U."/>
            <person name="Kothe G.O."/>
            <person name="Jedd G."/>
            <person name="Mewes H.-W."/>
            <person name="Staben C."/>
            <person name="Marcotte E."/>
            <person name="Greenberg D."/>
            <person name="Roy A."/>
            <person name="Foley K."/>
            <person name="Naylor J."/>
            <person name="Stange-Thomann N."/>
            <person name="Barrett R."/>
            <person name="Gnerre S."/>
            <person name="Kamal M."/>
            <person name="Kamvysselis M."/>
            <person name="Mauceli E.W."/>
            <person name="Bielke C."/>
            <person name="Rudd S."/>
            <person name="Frishman D."/>
            <person name="Krystofova S."/>
            <person name="Rasmussen C."/>
            <person name="Metzenberg R.L."/>
            <person name="Perkins D.D."/>
            <person name="Kroken S."/>
            <person name="Cogoni C."/>
            <person name="Macino G."/>
            <person name="Catcheside D.E.A."/>
            <person name="Li W."/>
            <person name="Pratt R.J."/>
            <person name="Osmani S.A."/>
            <person name="DeSouza C.P.C."/>
            <person name="Glass N.L."/>
            <person name="Orbach M.J."/>
            <person name="Berglund J.A."/>
            <person name="Voelker R."/>
            <person name="Yarden O."/>
            <person name="Plamann M."/>
            <person name="Seiler S."/>
            <person name="Dunlap J.C."/>
            <person name="Radford A."/>
            <person name="Aramayo R."/>
            <person name="Natvig D.O."/>
            <person name="Alex L.A."/>
            <person name="Mannhaupt G."/>
            <person name="Ebbole D.J."/>
            <person name="Freitag M."/>
            <person name="Paulsen I."/>
            <person name="Sachs M.S."/>
            <person name="Lander E.S."/>
            <person name="Nusbaum C."/>
            <person name="Birren B.W."/>
        </authorList>
    </citation>
    <scope>NUCLEOTIDE SEQUENCE [LARGE SCALE GENOMIC DNA]</scope>
    <source>
        <strain>ATCC 24698 / 74-OR23-1A / CBS 708.71 / DSM 1257 / FGSC 987</strain>
    </source>
</reference>
<reference evidence="6 7" key="2">
    <citation type="journal article" date="2020" name="Nat. Commun.">
        <title>Analysis of translating mitoribosome reveals functional characteristics of translation in mitochondria of fungi.</title>
        <authorList>
            <person name="Itoh Y."/>
            <person name="Naschberger A."/>
            <person name="Mortezaei N."/>
            <person name="Herrmann J.M."/>
            <person name="Amunts A."/>
        </authorList>
    </citation>
    <scope>STRUCTURE BY ELECTRON MICROSCOPY (2.74 ANGSTROMS)</scope>
</reference>
<gene>
    <name type="primary">mrpl36</name>
    <name type="ORF">NCU04138</name>
</gene>
<sequence>MSSKLPTTLLRRPSALPSTTTYTAYSASRPTPPSCTAHGAQGQQIRNATFVPRHRRPYQFTQLVQLSDGSTFTVRTTMPTALYKSAKDSRNHLLWQPSDKSLKNVELDEAGKLAAFRERYGRGWDLDAKMTPEEEAAAAAALAAGGGAGVPGGKAAKKAAEEALLAKKKKEEEEAAKKAAEAEEADPFDSLTDLISGYATENMNPGLNFKETRHYGKKK</sequence>
<accession>Q1K7L7</accession>
<dbReference type="EMBL" id="CM002240">
    <property type="protein sequence ID" value="EAA32058.1"/>
    <property type="molecule type" value="Genomic_DNA"/>
</dbReference>
<dbReference type="RefSeq" id="XP_961294.1">
    <property type="nucleotide sequence ID" value="XM_956201.2"/>
</dbReference>
<dbReference type="PDB" id="6YW5">
    <property type="method" value="EM"/>
    <property type="resolution" value="2.85 A"/>
    <property type="chains" value="V=1-219"/>
</dbReference>
<dbReference type="PDB" id="6YWS">
    <property type="method" value="EM"/>
    <property type="resolution" value="2.74 A"/>
    <property type="chains" value="V=1-219"/>
</dbReference>
<dbReference type="PDB" id="6YWV">
    <property type="method" value="EM"/>
    <property type="resolution" value="3.03 A"/>
    <property type="chains" value="V=1-219"/>
</dbReference>
<dbReference type="PDB" id="6YWX">
    <property type="method" value="EM"/>
    <property type="resolution" value="3.10 A"/>
    <property type="chains" value="V=1-219"/>
</dbReference>
<dbReference type="PDBsum" id="6YW5"/>
<dbReference type="PDBsum" id="6YWS"/>
<dbReference type="PDBsum" id="6YWV"/>
<dbReference type="PDBsum" id="6YWX"/>
<dbReference type="EMDB" id="EMD-10958"/>
<dbReference type="EMDB" id="EMD-10973"/>
<dbReference type="EMDB" id="EMD-10977"/>
<dbReference type="EMDB" id="EMD-10978"/>
<dbReference type="SMR" id="Q1K7L7"/>
<dbReference type="STRING" id="367110.Q1K7L7"/>
<dbReference type="PaxDb" id="5141-EFNCRP00000003915"/>
<dbReference type="EnsemblFungi" id="EAA32058">
    <property type="protein sequence ID" value="EAA32058"/>
    <property type="gene ID" value="NCU04138"/>
</dbReference>
<dbReference type="GeneID" id="3877458"/>
<dbReference type="KEGG" id="ncr:NCU04138"/>
<dbReference type="VEuPathDB" id="FungiDB:NCU04138"/>
<dbReference type="HOGENOM" id="CLU_109501_0_1_1"/>
<dbReference type="InParanoid" id="Q1K7L7"/>
<dbReference type="OMA" id="YGRGWDS"/>
<dbReference type="OrthoDB" id="5587740at2759"/>
<dbReference type="Proteomes" id="UP000001805">
    <property type="component" value="Chromosome 2, Linkage Group V"/>
</dbReference>
<dbReference type="GO" id="GO:0005762">
    <property type="term" value="C:mitochondrial large ribosomal subunit"/>
    <property type="evidence" value="ECO:0000318"/>
    <property type="project" value="GO_Central"/>
</dbReference>
<dbReference type="GO" id="GO:0003735">
    <property type="term" value="F:structural constituent of ribosome"/>
    <property type="evidence" value="ECO:0000318"/>
    <property type="project" value="GO_Central"/>
</dbReference>
<dbReference type="GO" id="GO:0032543">
    <property type="term" value="P:mitochondrial translation"/>
    <property type="evidence" value="ECO:0000318"/>
    <property type="project" value="GO_Central"/>
</dbReference>
<dbReference type="Gene3D" id="6.20.130.10">
    <property type="match status" value="1"/>
</dbReference>
<dbReference type="InterPro" id="IPR034600">
    <property type="entry name" value="Ribosomal_bL31m"/>
</dbReference>
<dbReference type="InterPro" id="IPR048874">
    <property type="entry name" value="Ribosomal_bL31m_N"/>
</dbReference>
<dbReference type="PANTHER" id="PTHR28174">
    <property type="entry name" value="54S RIBOSOMAL PROTEIN L36, MITOCHONDRIAL"/>
    <property type="match status" value="1"/>
</dbReference>
<dbReference type="PANTHER" id="PTHR28174:SF1">
    <property type="entry name" value="LARGE RIBOSOMAL SUBUNIT PROTEIN BL31M"/>
    <property type="match status" value="1"/>
</dbReference>
<dbReference type="Pfam" id="PF21492">
    <property type="entry name" value="bL31_N"/>
    <property type="match status" value="1"/>
</dbReference>
<name>RM36_NEUCR</name>
<keyword id="KW-0002">3D-structure</keyword>
<keyword id="KW-0496">Mitochondrion</keyword>
<keyword id="KW-1185">Reference proteome</keyword>
<feature type="chain" id="PRO_0000458623" description="Large ribosomal subunit protein bL31m">
    <location>
        <begin position="1"/>
        <end position="219"/>
    </location>
</feature>
<feature type="region of interest" description="Disordered" evidence="1">
    <location>
        <begin position="169"/>
        <end position="188"/>
    </location>
</feature>
<feature type="region of interest" description="Disordered" evidence="1">
    <location>
        <begin position="200"/>
        <end position="219"/>
    </location>
</feature>
<feature type="compositionally biased region" description="Basic and acidic residues" evidence="1">
    <location>
        <begin position="169"/>
        <end position="181"/>
    </location>
</feature>
<feature type="compositionally biased region" description="Basic and acidic residues" evidence="1">
    <location>
        <begin position="210"/>
        <end position="219"/>
    </location>
</feature>